<protein>
    <recommendedName>
        <fullName evidence="1">Phosphopentomutase</fullName>
        <ecNumber evidence="1">5.4.2.7</ecNumber>
    </recommendedName>
    <alternativeName>
        <fullName evidence="1">Phosphodeoxyribomutase</fullName>
    </alternativeName>
</protein>
<sequence length="407" mass="44230">MKRAFIMVLDSFGIGATEDADRFGDVGSDTLGHIAEACANGEADNGRKGPLNLPNLTRLGLVKAHEGSTGKIAAGMDGNADVIGAYAWAHELSSGKDTPSGHWEIAGVPVLFDWGYFSDHENSFPQELLDKLVKRANLPGYLGNCHSSGTVILDQLGEEHMKTGKPIFYTSADSVFQIACHEETFGLDKLYELCEIAREELTEGGYNIGRVIARPFIGDKAGNFQRTGNRHDLAVEPPAPTVLQKLVDEKQGHVVSVGKIADIYANCGITKKVKATGLDALFDATLKEMKEAGDKTIVFTNFVDFDSSWGHRRDIAGYAAGLELFDRRLPELMELVGEDDILILTADHGCDPSWTGTDHTREHIPVLIYGPKVKPGSLGHRETFADIGQTLATYFGTSPMDYGKNML</sequence>
<gene>
    <name evidence="1" type="primary">deoB</name>
    <name type="ordered locus">SPC_4705</name>
</gene>
<accession>C0Q7M5</accession>
<organism>
    <name type="scientific">Salmonella paratyphi C (strain RKS4594)</name>
    <dbReference type="NCBI Taxonomy" id="476213"/>
    <lineage>
        <taxon>Bacteria</taxon>
        <taxon>Pseudomonadati</taxon>
        <taxon>Pseudomonadota</taxon>
        <taxon>Gammaproteobacteria</taxon>
        <taxon>Enterobacterales</taxon>
        <taxon>Enterobacteriaceae</taxon>
        <taxon>Salmonella</taxon>
    </lineage>
</organism>
<proteinExistence type="inferred from homology"/>
<dbReference type="EC" id="5.4.2.7" evidence="1"/>
<dbReference type="EMBL" id="CP000857">
    <property type="protein sequence ID" value="ACN48748.1"/>
    <property type="molecule type" value="Genomic_DNA"/>
</dbReference>
<dbReference type="RefSeq" id="WP_000816459.1">
    <property type="nucleotide sequence ID" value="NC_012125.1"/>
</dbReference>
<dbReference type="SMR" id="C0Q7M5"/>
<dbReference type="KEGG" id="sei:SPC_4705"/>
<dbReference type="HOGENOM" id="CLU_053861_0_0_6"/>
<dbReference type="UniPathway" id="UPA00002">
    <property type="reaction ID" value="UER00467"/>
</dbReference>
<dbReference type="Proteomes" id="UP000001599">
    <property type="component" value="Chromosome"/>
</dbReference>
<dbReference type="GO" id="GO:0005829">
    <property type="term" value="C:cytosol"/>
    <property type="evidence" value="ECO:0007669"/>
    <property type="project" value="TreeGrafter"/>
</dbReference>
<dbReference type="GO" id="GO:0000287">
    <property type="term" value="F:magnesium ion binding"/>
    <property type="evidence" value="ECO:0007669"/>
    <property type="project" value="InterPro"/>
</dbReference>
<dbReference type="GO" id="GO:0030145">
    <property type="term" value="F:manganese ion binding"/>
    <property type="evidence" value="ECO:0007669"/>
    <property type="project" value="UniProtKB-UniRule"/>
</dbReference>
<dbReference type="GO" id="GO:0008973">
    <property type="term" value="F:phosphopentomutase activity"/>
    <property type="evidence" value="ECO:0007669"/>
    <property type="project" value="UniProtKB-UniRule"/>
</dbReference>
<dbReference type="GO" id="GO:0006018">
    <property type="term" value="P:2-deoxyribose 1-phosphate catabolic process"/>
    <property type="evidence" value="ECO:0007669"/>
    <property type="project" value="UniProtKB-UniRule"/>
</dbReference>
<dbReference type="GO" id="GO:0006015">
    <property type="term" value="P:5-phosphoribose 1-diphosphate biosynthetic process"/>
    <property type="evidence" value="ECO:0007669"/>
    <property type="project" value="UniProtKB-UniPathway"/>
</dbReference>
<dbReference type="GO" id="GO:0043094">
    <property type="term" value="P:metabolic compound salvage"/>
    <property type="evidence" value="ECO:0007669"/>
    <property type="project" value="InterPro"/>
</dbReference>
<dbReference type="GO" id="GO:0009117">
    <property type="term" value="P:nucleotide metabolic process"/>
    <property type="evidence" value="ECO:0007669"/>
    <property type="project" value="InterPro"/>
</dbReference>
<dbReference type="CDD" id="cd16009">
    <property type="entry name" value="PPM"/>
    <property type="match status" value="1"/>
</dbReference>
<dbReference type="FunFam" id="3.30.70.1250:FF:000001">
    <property type="entry name" value="Phosphopentomutase"/>
    <property type="match status" value="1"/>
</dbReference>
<dbReference type="Gene3D" id="3.40.720.10">
    <property type="entry name" value="Alkaline Phosphatase, subunit A"/>
    <property type="match status" value="1"/>
</dbReference>
<dbReference type="Gene3D" id="3.30.70.1250">
    <property type="entry name" value="Phosphopentomutase"/>
    <property type="match status" value="1"/>
</dbReference>
<dbReference type="HAMAP" id="MF_00740">
    <property type="entry name" value="Phosphopentomut"/>
    <property type="match status" value="1"/>
</dbReference>
<dbReference type="InterPro" id="IPR017850">
    <property type="entry name" value="Alkaline_phosphatase_core_sf"/>
</dbReference>
<dbReference type="InterPro" id="IPR010045">
    <property type="entry name" value="DeoB"/>
</dbReference>
<dbReference type="InterPro" id="IPR006124">
    <property type="entry name" value="Metalloenzyme"/>
</dbReference>
<dbReference type="InterPro" id="IPR024052">
    <property type="entry name" value="Phosphopentomutase_DeoB_cap_sf"/>
</dbReference>
<dbReference type="NCBIfam" id="TIGR01696">
    <property type="entry name" value="deoB"/>
    <property type="match status" value="1"/>
</dbReference>
<dbReference type="NCBIfam" id="NF003766">
    <property type="entry name" value="PRK05362.1"/>
    <property type="match status" value="1"/>
</dbReference>
<dbReference type="PANTHER" id="PTHR21110">
    <property type="entry name" value="PHOSPHOPENTOMUTASE"/>
    <property type="match status" value="1"/>
</dbReference>
<dbReference type="PANTHER" id="PTHR21110:SF0">
    <property type="entry name" value="PHOSPHOPENTOMUTASE"/>
    <property type="match status" value="1"/>
</dbReference>
<dbReference type="Pfam" id="PF01676">
    <property type="entry name" value="Metalloenzyme"/>
    <property type="match status" value="1"/>
</dbReference>
<dbReference type="PIRSF" id="PIRSF001491">
    <property type="entry name" value="Ppentomutase"/>
    <property type="match status" value="1"/>
</dbReference>
<dbReference type="SUPFAM" id="SSF53649">
    <property type="entry name" value="Alkaline phosphatase-like"/>
    <property type="match status" value="1"/>
</dbReference>
<dbReference type="SUPFAM" id="SSF143856">
    <property type="entry name" value="DeoB insert domain-like"/>
    <property type="match status" value="1"/>
</dbReference>
<evidence type="ECO:0000255" key="1">
    <source>
        <dbReference type="HAMAP-Rule" id="MF_00740"/>
    </source>
</evidence>
<reference key="1">
    <citation type="journal article" date="2009" name="PLoS ONE">
        <title>Salmonella paratyphi C: genetic divergence from Salmonella choleraesuis and pathogenic convergence with Salmonella typhi.</title>
        <authorList>
            <person name="Liu W.-Q."/>
            <person name="Feng Y."/>
            <person name="Wang Y."/>
            <person name="Zou Q.-H."/>
            <person name="Chen F."/>
            <person name="Guo J.-T."/>
            <person name="Peng Y.-H."/>
            <person name="Jin Y."/>
            <person name="Li Y.-G."/>
            <person name="Hu S.-N."/>
            <person name="Johnston R.N."/>
            <person name="Liu G.-R."/>
            <person name="Liu S.-L."/>
        </authorList>
    </citation>
    <scope>NUCLEOTIDE SEQUENCE [LARGE SCALE GENOMIC DNA]</scope>
    <source>
        <strain>RKS4594</strain>
    </source>
</reference>
<keyword id="KW-0963">Cytoplasm</keyword>
<keyword id="KW-0413">Isomerase</keyword>
<keyword id="KW-0464">Manganese</keyword>
<keyword id="KW-0479">Metal-binding</keyword>
<comment type="function">
    <text evidence="1">Isomerase that catalyzes the conversion of deoxy-ribose 1-phosphate (dRib-1-P) and ribose 1-phosphate (Rib-1-P) to deoxy-ribose 5-phosphate (dRib-5-P) and ribose 5-phosphate (Rib-5-P), respectively.</text>
</comment>
<comment type="catalytic activity">
    <reaction evidence="1">
        <text>2-deoxy-alpha-D-ribose 1-phosphate = 2-deoxy-D-ribose 5-phosphate</text>
        <dbReference type="Rhea" id="RHEA:27658"/>
        <dbReference type="ChEBI" id="CHEBI:57259"/>
        <dbReference type="ChEBI" id="CHEBI:62877"/>
        <dbReference type="EC" id="5.4.2.7"/>
    </reaction>
</comment>
<comment type="catalytic activity">
    <reaction evidence="1">
        <text>alpha-D-ribose 1-phosphate = D-ribose 5-phosphate</text>
        <dbReference type="Rhea" id="RHEA:18793"/>
        <dbReference type="ChEBI" id="CHEBI:57720"/>
        <dbReference type="ChEBI" id="CHEBI:78346"/>
        <dbReference type="EC" id="5.4.2.7"/>
    </reaction>
</comment>
<comment type="cofactor">
    <cofactor evidence="1">
        <name>Mn(2+)</name>
        <dbReference type="ChEBI" id="CHEBI:29035"/>
    </cofactor>
    <text evidence="1">Binds 2 manganese ions.</text>
</comment>
<comment type="pathway">
    <text evidence="1">Carbohydrate degradation; 2-deoxy-D-ribose 1-phosphate degradation; D-glyceraldehyde 3-phosphate and acetaldehyde from 2-deoxy-alpha-D-ribose 1-phosphate: step 1/2.</text>
</comment>
<comment type="subcellular location">
    <subcellularLocation>
        <location evidence="1">Cytoplasm</location>
    </subcellularLocation>
</comment>
<comment type="similarity">
    <text evidence="1">Belongs to the phosphopentomutase family.</text>
</comment>
<name>DEOB_SALPC</name>
<feature type="chain" id="PRO_1000148249" description="Phosphopentomutase">
    <location>
        <begin position="1"/>
        <end position="407"/>
    </location>
</feature>
<feature type="binding site" evidence="1">
    <location>
        <position position="10"/>
    </location>
    <ligand>
        <name>Mn(2+)</name>
        <dbReference type="ChEBI" id="CHEBI:29035"/>
        <label>1</label>
    </ligand>
</feature>
<feature type="binding site" evidence="1">
    <location>
        <position position="306"/>
    </location>
    <ligand>
        <name>Mn(2+)</name>
        <dbReference type="ChEBI" id="CHEBI:29035"/>
        <label>2</label>
    </ligand>
</feature>
<feature type="binding site" evidence="1">
    <location>
        <position position="311"/>
    </location>
    <ligand>
        <name>Mn(2+)</name>
        <dbReference type="ChEBI" id="CHEBI:29035"/>
        <label>2</label>
    </ligand>
</feature>
<feature type="binding site" evidence="1">
    <location>
        <position position="347"/>
    </location>
    <ligand>
        <name>Mn(2+)</name>
        <dbReference type="ChEBI" id="CHEBI:29035"/>
        <label>1</label>
    </ligand>
</feature>
<feature type="binding site" evidence="1">
    <location>
        <position position="348"/>
    </location>
    <ligand>
        <name>Mn(2+)</name>
        <dbReference type="ChEBI" id="CHEBI:29035"/>
        <label>1</label>
    </ligand>
</feature>
<feature type="binding site" evidence="1">
    <location>
        <position position="359"/>
    </location>
    <ligand>
        <name>Mn(2+)</name>
        <dbReference type="ChEBI" id="CHEBI:29035"/>
        <label>2</label>
    </ligand>
</feature>